<feature type="chain" id="PRO_0000130526" description="Large ribosomal subunit protein uL29">
    <location>
        <begin position="1"/>
        <end position="68"/>
    </location>
</feature>
<dbReference type="EMBL" id="AL445067">
    <property type="status" value="NOT_ANNOTATED_CDS"/>
    <property type="molecule type" value="Genomic_DNA"/>
</dbReference>
<dbReference type="SMR" id="P58086"/>
<dbReference type="PaxDb" id="273075-Ta1264a"/>
<dbReference type="eggNOG" id="arCOG00785">
    <property type="taxonomic scope" value="Archaea"/>
</dbReference>
<dbReference type="InParanoid" id="P58086"/>
<dbReference type="Proteomes" id="UP000001024">
    <property type="component" value="Chromosome"/>
</dbReference>
<dbReference type="GO" id="GO:1990904">
    <property type="term" value="C:ribonucleoprotein complex"/>
    <property type="evidence" value="ECO:0007669"/>
    <property type="project" value="UniProtKB-KW"/>
</dbReference>
<dbReference type="GO" id="GO:0005840">
    <property type="term" value="C:ribosome"/>
    <property type="evidence" value="ECO:0007669"/>
    <property type="project" value="UniProtKB-KW"/>
</dbReference>
<dbReference type="GO" id="GO:0003735">
    <property type="term" value="F:structural constituent of ribosome"/>
    <property type="evidence" value="ECO:0007669"/>
    <property type="project" value="InterPro"/>
</dbReference>
<dbReference type="GO" id="GO:0006412">
    <property type="term" value="P:translation"/>
    <property type="evidence" value="ECO:0007669"/>
    <property type="project" value="UniProtKB-UniRule"/>
</dbReference>
<dbReference type="CDD" id="cd00427">
    <property type="entry name" value="Ribosomal_L29_HIP"/>
    <property type="match status" value="1"/>
</dbReference>
<dbReference type="Gene3D" id="1.10.287.310">
    <property type="match status" value="1"/>
</dbReference>
<dbReference type="HAMAP" id="MF_00374">
    <property type="entry name" value="Ribosomal_uL29"/>
    <property type="match status" value="1"/>
</dbReference>
<dbReference type="InterPro" id="IPR001854">
    <property type="entry name" value="Ribosomal_uL29"/>
</dbReference>
<dbReference type="InterPro" id="IPR018254">
    <property type="entry name" value="Ribosomal_uL29_CS"/>
</dbReference>
<dbReference type="InterPro" id="IPR036049">
    <property type="entry name" value="Ribosomal_uL29_sf"/>
</dbReference>
<dbReference type="NCBIfam" id="TIGR00012">
    <property type="entry name" value="L29"/>
    <property type="match status" value="1"/>
</dbReference>
<dbReference type="Pfam" id="PF00831">
    <property type="entry name" value="Ribosomal_L29"/>
    <property type="match status" value="1"/>
</dbReference>
<dbReference type="SUPFAM" id="SSF46561">
    <property type="entry name" value="Ribosomal protein L29 (L29p)"/>
    <property type="match status" value="1"/>
</dbReference>
<dbReference type="PROSITE" id="PS00579">
    <property type="entry name" value="RIBOSOMAL_L29"/>
    <property type="match status" value="1"/>
</dbReference>
<organism>
    <name type="scientific">Thermoplasma acidophilum (strain ATCC 25905 / DSM 1728 / JCM 9062 / NBRC 15155 / AMRC-C165)</name>
    <dbReference type="NCBI Taxonomy" id="273075"/>
    <lineage>
        <taxon>Archaea</taxon>
        <taxon>Methanobacteriati</taxon>
        <taxon>Thermoplasmatota</taxon>
        <taxon>Thermoplasmata</taxon>
        <taxon>Thermoplasmatales</taxon>
        <taxon>Thermoplasmataceae</taxon>
        <taxon>Thermoplasma</taxon>
    </lineage>
</organism>
<protein>
    <recommendedName>
        <fullName evidence="1">Large ribosomal subunit protein uL29</fullName>
    </recommendedName>
    <alternativeName>
        <fullName>50S ribosomal protein L29</fullName>
    </alternativeName>
</protein>
<comment type="similarity">
    <text evidence="1">Belongs to the universal ribosomal protein uL29 family.</text>
</comment>
<accession>P58086</accession>
<proteinExistence type="inferred from homology"/>
<evidence type="ECO:0000305" key="1"/>
<sequence>MKRLELRAKQIRQMSKEERQETLKNLKESLLHERALISMGGSSPSPGKVRGIRRQIARLLTVEREEKR</sequence>
<gene>
    <name type="primary">rpl29</name>
    <name type="ordered locus">Ta1264.1</name>
</gene>
<keyword id="KW-1185">Reference proteome</keyword>
<keyword id="KW-0687">Ribonucleoprotein</keyword>
<keyword id="KW-0689">Ribosomal protein</keyword>
<name>RL29_THEAC</name>
<reference key="1">
    <citation type="journal article" date="2000" name="Nature">
        <title>The genome sequence of the thermoacidophilic scavenger Thermoplasma acidophilum.</title>
        <authorList>
            <person name="Ruepp A."/>
            <person name="Graml W."/>
            <person name="Santos-Martinez M.-L."/>
            <person name="Koretke K.K."/>
            <person name="Volker C."/>
            <person name="Mewes H.-W."/>
            <person name="Frishman D."/>
            <person name="Stocker S."/>
            <person name="Lupas A.N."/>
            <person name="Baumeister W."/>
        </authorList>
    </citation>
    <scope>NUCLEOTIDE SEQUENCE [LARGE SCALE GENOMIC DNA]</scope>
    <source>
        <strain>ATCC 25905 / DSM 1728 / JCM 9062 / NBRC 15155 / AMRC-C165</strain>
    </source>
</reference>